<evidence type="ECO:0000255" key="1">
    <source>
        <dbReference type="HAMAP-Rule" id="MF_00636"/>
    </source>
</evidence>
<evidence type="ECO:0000256" key="2">
    <source>
        <dbReference type="SAM" id="MobiDB-lite"/>
    </source>
</evidence>
<dbReference type="EMBL" id="AM746676">
    <property type="protein sequence ID" value="CAN95929.1"/>
    <property type="molecule type" value="Genomic_DNA"/>
</dbReference>
<dbReference type="RefSeq" id="WP_012238394.1">
    <property type="nucleotide sequence ID" value="NC_010162.1"/>
</dbReference>
<dbReference type="SMR" id="A9G7Z8"/>
<dbReference type="STRING" id="448385.sce5766"/>
<dbReference type="KEGG" id="scl:sce5766"/>
<dbReference type="eggNOG" id="COG1660">
    <property type="taxonomic scope" value="Bacteria"/>
</dbReference>
<dbReference type="HOGENOM" id="CLU_059558_0_0_7"/>
<dbReference type="OrthoDB" id="9784461at2"/>
<dbReference type="BioCyc" id="SCEL448385:SCE_RS29630-MONOMER"/>
<dbReference type="Proteomes" id="UP000002139">
    <property type="component" value="Chromosome"/>
</dbReference>
<dbReference type="GO" id="GO:0005524">
    <property type="term" value="F:ATP binding"/>
    <property type="evidence" value="ECO:0007669"/>
    <property type="project" value="UniProtKB-UniRule"/>
</dbReference>
<dbReference type="GO" id="GO:0005525">
    <property type="term" value="F:GTP binding"/>
    <property type="evidence" value="ECO:0007669"/>
    <property type="project" value="UniProtKB-UniRule"/>
</dbReference>
<dbReference type="HAMAP" id="MF_00636">
    <property type="entry name" value="RapZ_like"/>
    <property type="match status" value="1"/>
</dbReference>
<dbReference type="InterPro" id="IPR027417">
    <property type="entry name" value="P-loop_NTPase"/>
</dbReference>
<dbReference type="InterPro" id="IPR005337">
    <property type="entry name" value="RapZ-like"/>
</dbReference>
<dbReference type="InterPro" id="IPR053930">
    <property type="entry name" value="RapZ-like_N"/>
</dbReference>
<dbReference type="InterPro" id="IPR053931">
    <property type="entry name" value="RapZ_C"/>
</dbReference>
<dbReference type="NCBIfam" id="NF003828">
    <property type="entry name" value="PRK05416.1"/>
    <property type="match status" value="1"/>
</dbReference>
<dbReference type="PANTHER" id="PTHR30448">
    <property type="entry name" value="RNASE ADAPTER PROTEIN RAPZ"/>
    <property type="match status" value="1"/>
</dbReference>
<dbReference type="PANTHER" id="PTHR30448:SF0">
    <property type="entry name" value="RNASE ADAPTER PROTEIN RAPZ"/>
    <property type="match status" value="1"/>
</dbReference>
<dbReference type="Pfam" id="PF22740">
    <property type="entry name" value="PapZ_C"/>
    <property type="match status" value="1"/>
</dbReference>
<dbReference type="Pfam" id="PF03668">
    <property type="entry name" value="RapZ-like_N"/>
    <property type="match status" value="1"/>
</dbReference>
<dbReference type="SUPFAM" id="SSF52540">
    <property type="entry name" value="P-loop containing nucleoside triphosphate hydrolases"/>
    <property type="match status" value="1"/>
</dbReference>
<comment type="function">
    <text evidence="1">Displays ATPase and GTPase activities.</text>
</comment>
<comment type="similarity">
    <text evidence="1">Belongs to the RapZ-like family.</text>
</comment>
<protein>
    <recommendedName>
        <fullName evidence="1">Nucleotide-binding protein sce5766</fullName>
    </recommendedName>
</protein>
<sequence>MSNGGDQQQHGLLGPDGAPGRVVVVTGLSGAGKSTALHALEDLGFFCVDNLPTSLVQPAVEACESGGITRIGLGIDVRVGSFLAGATAALDSIRTGRDVVILFLDASDETLLRRFSETRRPHPLTTGGSGAIAMLDGVLLERERLASLRARATIELDTTRLSTHDLRRVVIERLRPARVEVPRMSTRFVSFGYKYGIPLDADLLFDVRFLDNPYFVHGLRELTGNDEPVREYILKNPDALEFICRTEQLLSFCMPRYASEGKSYLTVGIGCTGGRHRSVVLTNALSDSLRRKTGLPITVVHRDVARVSTSGVPSGVGEGMAGAPGVDLRLAQPGATPSEPRPASDTSVTGGER</sequence>
<feature type="chain" id="PRO_0000383288" description="Nucleotide-binding protein sce5766">
    <location>
        <begin position="1"/>
        <end position="353"/>
    </location>
</feature>
<feature type="region of interest" description="Disordered" evidence="2">
    <location>
        <begin position="310"/>
        <end position="353"/>
    </location>
</feature>
<feature type="compositionally biased region" description="Polar residues" evidence="2">
    <location>
        <begin position="344"/>
        <end position="353"/>
    </location>
</feature>
<feature type="binding site" evidence="1">
    <location>
        <begin position="27"/>
        <end position="34"/>
    </location>
    <ligand>
        <name>ATP</name>
        <dbReference type="ChEBI" id="CHEBI:30616"/>
    </ligand>
</feature>
<feature type="binding site" evidence="1">
    <location>
        <begin position="76"/>
        <end position="79"/>
    </location>
    <ligand>
        <name>GTP</name>
        <dbReference type="ChEBI" id="CHEBI:37565"/>
    </ligand>
</feature>
<name>Y5766_SORC5</name>
<gene>
    <name type="ordered locus">sce5766</name>
</gene>
<proteinExistence type="inferred from homology"/>
<reference key="1">
    <citation type="journal article" date="2007" name="Nat. Biotechnol.">
        <title>Complete genome sequence of the myxobacterium Sorangium cellulosum.</title>
        <authorList>
            <person name="Schneiker S."/>
            <person name="Perlova O."/>
            <person name="Kaiser O."/>
            <person name="Gerth K."/>
            <person name="Alici A."/>
            <person name="Altmeyer M.O."/>
            <person name="Bartels D."/>
            <person name="Bekel T."/>
            <person name="Beyer S."/>
            <person name="Bode E."/>
            <person name="Bode H.B."/>
            <person name="Bolten C.J."/>
            <person name="Choudhuri J.V."/>
            <person name="Doss S."/>
            <person name="Elnakady Y.A."/>
            <person name="Frank B."/>
            <person name="Gaigalat L."/>
            <person name="Goesmann A."/>
            <person name="Groeger C."/>
            <person name="Gross F."/>
            <person name="Jelsbak L."/>
            <person name="Jelsbak L."/>
            <person name="Kalinowski J."/>
            <person name="Kegler C."/>
            <person name="Knauber T."/>
            <person name="Konietzny S."/>
            <person name="Kopp M."/>
            <person name="Krause L."/>
            <person name="Krug D."/>
            <person name="Linke B."/>
            <person name="Mahmud T."/>
            <person name="Martinez-Arias R."/>
            <person name="McHardy A.C."/>
            <person name="Merai M."/>
            <person name="Meyer F."/>
            <person name="Mormann S."/>
            <person name="Munoz-Dorado J."/>
            <person name="Perez J."/>
            <person name="Pradella S."/>
            <person name="Rachid S."/>
            <person name="Raddatz G."/>
            <person name="Rosenau F."/>
            <person name="Rueckert C."/>
            <person name="Sasse F."/>
            <person name="Scharfe M."/>
            <person name="Schuster S.C."/>
            <person name="Suen G."/>
            <person name="Treuner-Lange A."/>
            <person name="Velicer G.J."/>
            <person name="Vorholter F.-J."/>
            <person name="Weissman K.J."/>
            <person name="Welch R.D."/>
            <person name="Wenzel S.C."/>
            <person name="Whitworth D.E."/>
            <person name="Wilhelm S."/>
            <person name="Wittmann C."/>
            <person name="Bloecker H."/>
            <person name="Puehler A."/>
            <person name="Mueller R."/>
        </authorList>
    </citation>
    <scope>NUCLEOTIDE SEQUENCE [LARGE SCALE GENOMIC DNA]</scope>
    <source>
        <strain>So ce56</strain>
    </source>
</reference>
<accession>A9G7Z8</accession>
<keyword id="KW-0067">ATP-binding</keyword>
<keyword id="KW-0342">GTP-binding</keyword>
<keyword id="KW-0547">Nucleotide-binding</keyword>
<keyword id="KW-1185">Reference proteome</keyword>
<organism>
    <name type="scientific">Sorangium cellulosum (strain So ce56)</name>
    <name type="common">Polyangium cellulosum (strain So ce56)</name>
    <dbReference type="NCBI Taxonomy" id="448385"/>
    <lineage>
        <taxon>Bacteria</taxon>
        <taxon>Pseudomonadati</taxon>
        <taxon>Myxococcota</taxon>
        <taxon>Polyangia</taxon>
        <taxon>Polyangiales</taxon>
        <taxon>Polyangiaceae</taxon>
        <taxon>Sorangium</taxon>
    </lineage>
</organism>